<protein>
    <recommendedName>
        <fullName evidence="1">33 kDa chaperonin</fullName>
    </recommendedName>
    <alternativeName>
        <fullName evidence="1">Heat shock protein 33 homolog</fullName>
        <shortName evidence="1">HSP33</shortName>
    </alternativeName>
</protein>
<feature type="chain" id="PRO_1000015547" description="33 kDa chaperonin">
    <location>
        <begin position="1"/>
        <end position="293"/>
    </location>
</feature>
<feature type="disulfide bond" description="Redox-active" evidence="1">
    <location>
        <begin position="236"/>
        <end position="238"/>
    </location>
</feature>
<feature type="disulfide bond" description="Redox-active" evidence="1">
    <location>
        <begin position="269"/>
        <end position="272"/>
    </location>
</feature>
<evidence type="ECO:0000255" key="1">
    <source>
        <dbReference type="HAMAP-Rule" id="MF_00117"/>
    </source>
</evidence>
<reference key="1">
    <citation type="journal article" date="2006" name="Proc. Natl. Acad. Sci. U.S.A.">
        <title>The complete genome sequence of Lactobacillus bulgaricus reveals extensive and ongoing reductive evolution.</title>
        <authorList>
            <person name="van de Guchte M."/>
            <person name="Penaud S."/>
            <person name="Grimaldi C."/>
            <person name="Barbe V."/>
            <person name="Bryson K."/>
            <person name="Nicolas P."/>
            <person name="Robert C."/>
            <person name="Oztas S."/>
            <person name="Mangenot S."/>
            <person name="Couloux A."/>
            <person name="Loux V."/>
            <person name="Dervyn R."/>
            <person name="Bossy R."/>
            <person name="Bolotin A."/>
            <person name="Batto J.-M."/>
            <person name="Walunas T."/>
            <person name="Gibrat J.-F."/>
            <person name="Bessieres P."/>
            <person name="Weissenbach J."/>
            <person name="Ehrlich S.D."/>
            <person name="Maguin E."/>
        </authorList>
    </citation>
    <scope>NUCLEOTIDE SEQUENCE [LARGE SCALE GENOMIC DNA]</scope>
    <source>
        <strain>ATCC 11842 / DSM 20081 / BCRC 10696 / JCM 1002 / NBRC 13953 / NCIMB 11778 / NCTC 12712 / WDCM 00102 / Lb 14</strain>
    </source>
</reference>
<organism>
    <name type="scientific">Lactobacillus delbrueckii subsp. bulgaricus (strain ATCC 11842 / DSM 20081 / BCRC 10696 / JCM 1002 / NBRC 13953 / NCIMB 11778 / NCTC 12712 / WDCM 00102 / Lb 14)</name>
    <dbReference type="NCBI Taxonomy" id="390333"/>
    <lineage>
        <taxon>Bacteria</taxon>
        <taxon>Bacillati</taxon>
        <taxon>Bacillota</taxon>
        <taxon>Bacilli</taxon>
        <taxon>Lactobacillales</taxon>
        <taxon>Lactobacillaceae</taxon>
        <taxon>Lactobacillus</taxon>
    </lineage>
</organism>
<gene>
    <name evidence="1" type="primary">hslO</name>
    <name type="ordered locus">Ldb0369</name>
</gene>
<name>HSLO_LACDA</name>
<proteinExistence type="inferred from homology"/>
<dbReference type="EMBL" id="CR954253">
    <property type="protein sequence ID" value="CAI97207.1"/>
    <property type="molecule type" value="Genomic_DNA"/>
</dbReference>
<dbReference type="RefSeq" id="WP_003622441.1">
    <property type="nucleotide sequence ID" value="NZ_JQAV01000001.1"/>
</dbReference>
<dbReference type="SMR" id="Q1GBN7"/>
<dbReference type="STRING" id="390333.Ldb0369"/>
<dbReference type="KEGG" id="ldb:Ldb0369"/>
<dbReference type="PATRIC" id="fig|390333.13.peg.419"/>
<dbReference type="eggNOG" id="COG1281">
    <property type="taxonomic scope" value="Bacteria"/>
</dbReference>
<dbReference type="HOGENOM" id="CLU_054493_1_0_9"/>
<dbReference type="BioCyc" id="LDEL390333:LDB_RS01560-MONOMER"/>
<dbReference type="Proteomes" id="UP000001259">
    <property type="component" value="Chromosome"/>
</dbReference>
<dbReference type="GO" id="GO:0005737">
    <property type="term" value="C:cytoplasm"/>
    <property type="evidence" value="ECO:0007669"/>
    <property type="project" value="UniProtKB-SubCell"/>
</dbReference>
<dbReference type="GO" id="GO:0044183">
    <property type="term" value="F:protein folding chaperone"/>
    <property type="evidence" value="ECO:0007669"/>
    <property type="project" value="TreeGrafter"/>
</dbReference>
<dbReference type="GO" id="GO:0051082">
    <property type="term" value="F:unfolded protein binding"/>
    <property type="evidence" value="ECO:0007669"/>
    <property type="project" value="UniProtKB-UniRule"/>
</dbReference>
<dbReference type="GO" id="GO:0042026">
    <property type="term" value="P:protein refolding"/>
    <property type="evidence" value="ECO:0007669"/>
    <property type="project" value="TreeGrafter"/>
</dbReference>
<dbReference type="CDD" id="cd00498">
    <property type="entry name" value="Hsp33"/>
    <property type="match status" value="1"/>
</dbReference>
<dbReference type="Gene3D" id="3.55.30.10">
    <property type="entry name" value="Hsp33 domain"/>
    <property type="match status" value="1"/>
</dbReference>
<dbReference type="Gene3D" id="3.90.1280.10">
    <property type="entry name" value="HSP33 redox switch-like"/>
    <property type="match status" value="1"/>
</dbReference>
<dbReference type="HAMAP" id="MF_00117">
    <property type="entry name" value="HslO"/>
    <property type="match status" value="1"/>
</dbReference>
<dbReference type="InterPro" id="IPR000397">
    <property type="entry name" value="Heat_shock_Hsp33"/>
</dbReference>
<dbReference type="InterPro" id="IPR016154">
    <property type="entry name" value="Heat_shock_Hsp33_C"/>
</dbReference>
<dbReference type="InterPro" id="IPR016153">
    <property type="entry name" value="Heat_shock_Hsp33_N"/>
</dbReference>
<dbReference type="NCBIfam" id="NF001033">
    <property type="entry name" value="PRK00114.1"/>
    <property type="match status" value="1"/>
</dbReference>
<dbReference type="PANTHER" id="PTHR30111">
    <property type="entry name" value="33 KDA CHAPERONIN"/>
    <property type="match status" value="1"/>
</dbReference>
<dbReference type="PANTHER" id="PTHR30111:SF1">
    <property type="entry name" value="33 KDA CHAPERONIN"/>
    <property type="match status" value="1"/>
</dbReference>
<dbReference type="Pfam" id="PF01430">
    <property type="entry name" value="HSP33"/>
    <property type="match status" value="1"/>
</dbReference>
<dbReference type="PIRSF" id="PIRSF005261">
    <property type="entry name" value="Heat_shock_Hsp33"/>
    <property type="match status" value="1"/>
</dbReference>
<dbReference type="SUPFAM" id="SSF64397">
    <property type="entry name" value="Hsp33 domain"/>
    <property type="match status" value="1"/>
</dbReference>
<dbReference type="SUPFAM" id="SSF118352">
    <property type="entry name" value="HSP33 redox switch-like"/>
    <property type="match status" value="1"/>
</dbReference>
<comment type="function">
    <text evidence="1">Redox regulated molecular chaperone. Protects both thermally unfolding and oxidatively damaged proteins from irreversible aggregation. Plays an important role in the bacterial defense system toward oxidative stress.</text>
</comment>
<comment type="subcellular location">
    <subcellularLocation>
        <location evidence="1">Cytoplasm</location>
    </subcellularLocation>
</comment>
<comment type="PTM">
    <text evidence="1">Under oxidizing conditions two disulfide bonds are formed involving the reactive cysteines. Under reducing conditions zinc is bound to the reactive cysteines and the protein is inactive.</text>
</comment>
<comment type="similarity">
    <text evidence="1">Belongs to the HSP33 family.</text>
</comment>
<accession>Q1GBN7</accession>
<keyword id="KW-0143">Chaperone</keyword>
<keyword id="KW-0963">Cytoplasm</keyword>
<keyword id="KW-1015">Disulfide bond</keyword>
<keyword id="KW-0676">Redox-active center</keyword>
<keyword id="KW-1185">Reference proteome</keyword>
<keyword id="KW-0346">Stress response</keyword>
<keyword id="KW-0862">Zinc</keyword>
<sequence length="293" mass="31572">MNDYLIKAINASKDLRLLTINGKDLVAEAQKRHDTWSASSAVLGRSLLGTLLLAGAELKGDQELTLRLLGDGPVGAAVVTAKSDLTVKGYVQNNHVALPAREDGHIDVKKAVGKGWLQVTKDLGLKQPYTGEVPIVSGEIAEDLTYYLAKSEQIPSAVGLSVFVNPNDTIGAAGGFLLQALPGASEELLQETEDRIKALPQLSSAFLDGMTPEDLAKKILGDDCKILEKDEVSYHCDCSKEKYAGMLETLKGSQLKEMIDEDHGAELVCNFCGNKYNFTEAELQAILDKKLGK</sequence>